<evidence type="ECO:0000255" key="1">
    <source>
        <dbReference type="HAMAP-Rule" id="MF_01151"/>
    </source>
</evidence>
<sequence length="172" mass="20401">MSEKEKKELTQECEELKEKYKELEEYAKRLKAEYENYREEVAREKRELIKNANEYLISKLIPVLDDFERALNQGEKGDAFYEGVKMIYKKLLNVLEKEGLTKIHVGEKFDPFEHEAVERVETEDVEEYTILEVVESGYKFHGKVLKPAKVKVAVKPRKKEERKVEEPSDKKE</sequence>
<comment type="function">
    <text evidence="1">Participates actively in the response to hyperosmotic and heat shock by preventing the aggregation of stress-denatured proteins, in association with DnaK and GrpE. It is the nucleotide exchange factor for DnaK and may function as a thermosensor. Unfolded proteins bind initially to DnaJ; upon interaction with the DnaJ-bound protein, DnaK hydrolyzes its bound ATP, resulting in the formation of a stable complex. GrpE releases ADP from DnaK; ATP binding to DnaK triggers the release of the substrate protein, thus completing the reaction cycle. Several rounds of ATP-dependent interactions between DnaJ, DnaK and GrpE are required for fully efficient folding.</text>
</comment>
<comment type="subunit">
    <text evidence="1">Homodimer.</text>
</comment>
<comment type="subcellular location">
    <subcellularLocation>
        <location evidence="1">Cytoplasm</location>
    </subcellularLocation>
</comment>
<comment type="similarity">
    <text evidence="1">Belongs to the GrpE family.</text>
</comment>
<keyword id="KW-0143">Chaperone</keyword>
<keyword id="KW-0963">Cytoplasm</keyword>
<keyword id="KW-1185">Reference proteome</keyword>
<keyword id="KW-0346">Stress response</keyword>
<name>GRPE_THEMA</name>
<proteinExistence type="inferred from homology"/>
<gene>
    <name evidence="1" type="primary">grpE</name>
    <name type="ordered locus">TM_0850</name>
</gene>
<dbReference type="EMBL" id="AE000512">
    <property type="protein sequence ID" value="AAD35932.1"/>
    <property type="molecule type" value="Genomic_DNA"/>
</dbReference>
<dbReference type="PIR" id="C72327">
    <property type="entry name" value="C72327"/>
</dbReference>
<dbReference type="RefSeq" id="NP_228659.1">
    <property type="nucleotide sequence ID" value="NC_000853.1"/>
</dbReference>
<dbReference type="RefSeq" id="WP_004080776.1">
    <property type="nucleotide sequence ID" value="NZ_CP011107.1"/>
</dbReference>
<dbReference type="SMR" id="Q9WZV4"/>
<dbReference type="FunCoup" id="Q9WZV4">
    <property type="interactions" value="348"/>
</dbReference>
<dbReference type="STRING" id="243274.TM_0850"/>
<dbReference type="PaxDb" id="243274-THEMA_00390"/>
<dbReference type="EnsemblBacteria" id="AAD35932">
    <property type="protein sequence ID" value="AAD35932"/>
    <property type="gene ID" value="TM_0850"/>
</dbReference>
<dbReference type="KEGG" id="tma:TM0850"/>
<dbReference type="KEGG" id="tmi:THEMA_00390"/>
<dbReference type="KEGG" id="tmm:Tmari_0852"/>
<dbReference type="KEGG" id="tmw:THMA_0871"/>
<dbReference type="eggNOG" id="COG0576">
    <property type="taxonomic scope" value="Bacteria"/>
</dbReference>
<dbReference type="InParanoid" id="Q9WZV4"/>
<dbReference type="OrthoDB" id="37628at2"/>
<dbReference type="Proteomes" id="UP000008183">
    <property type="component" value="Chromosome"/>
</dbReference>
<dbReference type="GO" id="GO:0005737">
    <property type="term" value="C:cytoplasm"/>
    <property type="evidence" value="ECO:0007669"/>
    <property type="project" value="UniProtKB-SubCell"/>
</dbReference>
<dbReference type="GO" id="GO:0000774">
    <property type="term" value="F:adenyl-nucleotide exchange factor activity"/>
    <property type="evidence" value="ECO:0000318"/>
    <property type="project" value="GO_Central"/>
</dbReference>
<dbReference type="GO" id="GO:0042803">
    <property type="term" value="F:protein homodimerization activity"/>
    <property type="evidence" value="ECO:0007669"/>
    <property type="project" value="InterPro"/>
</dbReference>
<dbReference type="GO" id="GO:0051087">
    <property type="term" value="F:protein-folding chaperone binding"/>
    <property type="evidence" value="ECO:0007669"/>
    <property type="project" value="InterPro"/>
</dbReference>
<dbReference type="GO" id="GO:0051082">
    <property type="term" value="F:unfolded protein binding"/>
    <property type="evidence" value="ECO:0000318"/>
    <property type="project" value="GO_Central"/>
</dbReference>
<dbReference type="GO" id="GO:0006457">
    <property type="term" value="P:protein folding"/>
    <property type="evidence" value="ECO:0007669"/>
    <property type="project" value="InterPro"/>
</dbReference>
<dbReference type="CDD" id="cd00446">
    <property type="entry name" value="GrpE"/>
    <property type="match status" value="1"/>
</dbReference>
<dbReference type="FunFam" id="2.30.22.10:FF:000001">
    <property type="entry name" value="Protein GrpE"/>
    <property type="match status" value="1"/>
</dbReference>
<dbReference type="Gene3D" id="3.90.20.20">
    <property type="match status" value="1"/>
</dbReference>
<dbReference type="Gene3D" id="2.30.22.10">
    <property type="entry name" value="Head domain of nucleotide exchange factor GrpE"/>
    <property type="match status" value="1"/>
</dbReference>
<dbReference type="HAMAP" id="MF_01151">
    <property type="entry name" value="GrpE"/>
    <property type="match status" value="1"/>
</dbReference>
<dbReference type="InterPro" id="IPR000740">
    <property type="entry name" value="GrpE"/>
</dbReference>
<dbReference type="InterPro" id="IPR013805">
    <property type="entry name" value="GrpE_coiled_coil"/>
</dbReference>
<dbReference type="InterPro" id="IPR009012">
    <property type="entry name" value="GrpE_head"/>
</dbReference>
<dbReference type="PANTHER" id="PTHR21237">
    <property type="entry name" value="GRPE PROTEIN"/>
    <property type="match status" value="1"/>
</dbReference>
<dbReference type="PANTHER" id="PTHR21237:SF23">
    <property type="entry name" value="GRPE PROTEIN HOMOLOG, MITOCHONDRIAL"/>
    <property type="match status" value="1"/>
</dbReference>
<dbReference type="Pfam" id="PF01025">
    <property type="entry name" value="GrpE"/>
    <property type="match status" value="1"/>
</dbReference>
<dbReference type="PRINTS" id="PR00773">
    <property type="entry name" value="GRPEPROTEIN"/>
</dbReference>
<dbReference type="SUPFAM" id="SSF58014">
    <property type="entry name" value="Coiled-coil domain of nucleotide exchange factor GrpE"/>
    <property type="match status" value="1"/>
</dbReference>
<dbReference type="SUPFAM" id="SSF51064">
    <property type="entry name" value="Head domain of nucleotide exchange factor GrpE"/>
    <property type="match status" value="1"/>
</dbReference>
<dbReference type="PROSITE" id="PS01071">
    <property type="entry name" value="GRPE"/>
    <property type="match status" value="1"/>
</dbReference>
<reference key="1">
    <citation type="journal article" date="1999" name="Nature">
        <title>Evidence for lateral gene transfer between Archaea and Bacteria from genome sequence of Thermotoga maritima.</title>
        <authorList>
            <person name="Nelson K.E."/>
            <person name="Clayton R.A."/>
            <person name="Gill S.R."/>
            <person name="Gwinn M.L."/>
            <person name="Dodson R.J."/>
            <person name="Haft D.H."/>
            <person name="Hickey E.K."/>
            <person name="Peterson J.D."/>
            <person name="Nelson W.C."/>
            <person name="Ketchum K.A."/>
            <person name="McDonald L.A."/>
            <person name="Utterback T.R."/>
            <person name="Malek J.A."/>
            <person name="Linher K.D."/>
            <person name="Garrett M.M."/>
            <person name="Stewart A.M."/>
            <person name="Cotton M.D."/>
            <person name="Pratt M.S."/>
            <person name="Phillips C.A."/>
            <person name="Richardson D.L."/>
            <person name="Heidelberg J.F."/>
            <person name="Sutton G.G."/>
            <person name="Fleischmann R.D."/>
            <person name="Eisen J.A."/>
            <person name="White O."/>
            <person name="Salzberg S.L."/>
            <person name="Smith H.O."/>
            <person name="Venter J.C."/>
            <person name="Fraser C.M."/>
        </authorList>
    </citation>
    <scope>NUCLEOTIDE SEQUENCE [LARGE SCALE GENOMIC DNA]</scope>
    <source>
        <strain>ATCC 43589 / DSM 3109 / JCM 10099 / NBRC 100826 / MSB8</strain>
    </source>
</reference>
<accession>Q9WZV4</accession>
<feature type="chain" id="PRO_0000113882" description="Protein GrpE">
    <location>
        <begin position="1"/>
        <end position="172"/>
    </location>
</feature>
<organism>
    <name type="scientific">Thermotoga maritima (strain ATCC 43589 / DSM 3109 / JCM 10099 / NBRC 100826 / MSB8)</name>
    <dbReference type="NCBI Taxonomy" id="243274"/>
    <lineage>
        <taxon>Bacteria</taxon>
        <taxon>Thermotogati</taxon>
        <taxon>Thermotogota</taxon>
        <taxon>Thermotogae</taxon>
        <taxon>Thermotogales</taxon>
        <taxon>Thermotogaceae</taxon>
        <taxon>Thermotoga</taxon>
    </lineage>
</organism>
<protein>
    <recommendedName>
        <fullName evidence="1">Protein GrpE</fullName>
    </recommendedName>
    <alternativeName>
        <fullName evidence="1">HSP-70 cofactor</fullName>
    </alternativeName>
</protein>